<accession>Q3ACA4</accession>
<keyword id="KW-0004">4Fe-4S</keyword>
<keyword id="KW-0963">Cytoplasm</keyword>
<keyword id="KW-0408">Iron</keyword>
<keyword id="KW-0411">Iron-sulfur</keyword>
<keyword id="KW-0479">Metal-binding</keyword>
<keyword id="KW-1185">Reference proteome</keyword>
<keyword id="KW-0949">S-adenosyl-L-methionine</keyword>
<keyword id="KW-0808">Transferase</keyword>
<keyword id="KW-0819">tRNA processing</keyword>
<reference key="1">
    <citation type="journal article" date="2005" name="PLoS Genet.">
        <title>Life in hot carbon monoxide: the complete genome sequence of Carboxydothermus hydrogenoformans Z-2901.</title>
        <authorList>
            <person name="Wu M."/>
            <person name="Ren Q."/>
            <person name="Durkin A.S."/>
            <person name="Daugherty S.C."/>
            <person name="Brinkac L.M."/>
            <person name="Dodson R.J."/>
            <person name="Madupu R."/>
            <person name="Sullivan S.A."/>
            <person name="Kolonay J.F."/>
            <person name="Nelson W.C."/>
            <person name="Tallon L.J."/>
            <person name="Jones K.M."/>
            <person name="Ulrich L.E."/>
            <person name="Gonzalez J.M."/>
            <person name="Zhulin I.B."/>
            <person name="Robb F.T."/>
            <person name="Eisen J.A."/>
        </authorList>
    </citation>
    <scope>NUCLEOTIDE SEQUENCE [LARGE SCALE GENOMIC DNA]</scope>
    <source>
        <strain>ATCC BAA-161 / DSM 6008 / Z-2901</strain>
    </source>
</reference>
<name>MIAB_CARHZ</name>
<sequence length="440" mass="50252">MAEKSYYIITHGCQMNVHDSETIAGILESMGFVPSPEEKTADLIIINTCSVRETAENKVFTKIGELKKLKRENPDLVIGVGGCIPQQEKVAKRLLERFPHLDFIFGTHNLPELPKILERVFEKHERVLEVWQSEGQIVEGIPVKREPGVRAWVTIMYGCNNFCTYCIVPYVRGRERSRKKEDILQEIRQLVAEGYREVTLLGQNVNSYGKDLKGKPMFAELLADIEKIDGLWRVRFTTSHPRDLTDDVIEVMASSRKICEHLHLPVQAGSNKILKAMHRGYTREYYLNLVEKIRAKIPKVSFTTDIIVGFPGETEEDFEQTLDLVRKVRYDSAFTFVYNKRTGTPAAEMKDQVPEEVKSRRIQELIELQNGISLELNKNEEGNIHEILVEGKSKTDETKLAGRTRTNKLVVFNGNEDLVGKLVKVKITEGKLFHLEGVLV</sequence>
<proteinExistence type="inferred from homology"/>
<protein>
    <recommendedName>
        <fullName evidence="1">tRNA-2-methylthio-N(6)-dimethylallyladenosine synthase</fullName>
        <ecNumber evidence="1">2.8.4.3</ecNumber>
    </recommendedName>
    <alternativeName>
        <fullName evidence="1">(Dimethylallyl)adenosine tRNA methylthiotransferase MiaB</fullName>
    </alternativeName>
    <alternativeName>
        <fullName evidence="1">tRNA-i(6)A37 methylthiotransferase</fullName>
    </alternativeName>
</protein>
<evidence type="ECO:0000255" key="1">
    <source>
        <dbReference type="HAMAP-Rule" id="MF_01864"/>
    </source>
</evidence>
<evidence type="ECO:0000255" key="2">
    <source>
        <dbReference type="PROSITE-ProRule" id="PRU01266"/>
    </source>
</evidence>
<feature type="chain" id="PRO_0000374203" description="tRNA-2-methylthio-N(6)-dimethylallyladenosine synthase">
    <location>
        <begin position="1"/>
        <end position="440"/>
    </location>
</feature>
<feature type="domain" description="MTTase N-terminal" evidence="1">
    <location>
        <begin position="4"/>
        <end position="122"/>
    </location>
</feature>
<feature type="domain" description="Radical SAM core" evidence="2">
    <location>
        <begin position="145"/>
        <end position="375"/>
    </location>
</feature>
<feature type="domain" description="TRAM" evidence="1">
    <location>
        <begin position="378"/>
        <end position="440"/>
    </location>
</feature>
<feature type="binding site" evidence="1">
    <location>
        <position position="13"/>
    </location>
    <ligand>
        <name>[4Fe-4S] cluster</name>
        <dbReference type="ChEBI" id="CHEBI:49883"/>
        <label>1</label>
    </ligand>
</feature>
<feature type="binding site" evidence="1">
    <location>
        <position position="49"/>
    </location>
    <ligand>
        <name>[4Fe-4S] cluster</name>
        <dbReference type="ChEBI" id="CHEBI:49883"/>
        <label>1</label>
    </ligand>
</feature>
<feature type="binding site" evidence="1">
    <location>
        <position position="83"/>
    </location>
    <ligand>
        <name>[4Fe-4S] cluster</name>
        <dbReference type="ChEBI" id="CHEBI:49883"/>
        <label>1</label>
    </ligand>
</feature>
<feature type="binding site" evidence="1">
    <location>
        <position position="159"/>
    </location>
    <ligand>
        <name>[4Fe-4S] cluster</name>
        <dbReference type="ChEBI" id="CHEBI:49883"/>
        <label>2</label>
        <note>4Fe-4S-S-AdoMet</note>
    </ligand>
</feature>
<feature type="binding site" evidence="1">
    <location>
        <position position="163"/>
    </location>
    <ligand>
        <name>[4Fe-4S] cluster</name>
        <dbReference type="ChEBI" id="CHEBI:49883"/>
        <label>2</label>
        <note>4Fe-4S-S-AdoMet</note>
    </ligand>
</feature>
<feature type="binding site" evidence="1">
    <location>
        <position position="166"/>
    </location>
    <ligand>
        <name>[4Fe-4S] cluster</name>
        <dbReference type="ChEBI" id="CHEBI:49883"/>
        <label>2</label>
        <note>4Fe-4S-S-AdoMet</note>
    </ligand>
</feature>
<comment type="function">
    <text evidence="1">Catalyzes the methylthiolation of N6-(dimethylallyl)adenosine (i(6)A), leading to the formation of 2-methylthio-N6-(dimethylallyl)adenosine (ms(2)i(6)A) at position 37 in tRNAs that read codons beginning with uridine.</text>
</comment>
<comment type="catalytic activity">
    <reaction evidence="1">
        <text>N(6)-dimethylallyladenosine(37) in tRNA + (sulfur carrier)-SH + AH2 + 2 S-adenosyl-L-methionine = 2-methylsulfanyl-N(6)-dimethylallyladenosine(37) in tRNA + (sulfur carrier)-H + 5'-deoxyadenosine + L-methionine + A + S-adenosyl-L-homocysteine + 2 H(+)</text>
        <dbReference type="Rhea" id="RHEA:37067"/>
        <dbReference type="Rhea" id="RHEA-COMP:10375"/>
        <dbReference type="Rhea" id="RHEA-COMP:10376"/>
        <dbReference type="Rhea" id="RHEA-COMP:14737"/>
        <dbReference type="Rhea" id="RHEA-COMP:14739"/>
        <dbReference type="ChEBI" id="CHEBI:13193"/>
        <dbReference type="ChEBI" id="CHEBI:15378"/>
        <dbReference type="ChEBI" id="CHEBI:17319"/>
        <dbReference type="ChEBI" id="CHEBI:17499"/>
        <dbReference type="ChEBI" id="CHEBI:29917"/>
        <dbReference type="ChEBI" id="CHEBI:57844"/>
        <dbReference type="ChEBI" id="CHEBI:57856"/>
        <dbReference type="ChEBI" id="CHEBI:59789"/>
        <dbReference type="ChEBI" id="CHEBI:64428"/>
        <dbReference type="ChEBI" id="CHEBI:74415"/>
        <dbReference type="ChEBI" id="CHEBI:74417"/>
        <dbReference type="EC" id="2.8.4.3"/>
    </reaction>
</comment>
<comment type="cofactor">
    <cofactor evidence="1">
        <name>[4Fe-4S] cluster</name>
        <dbReference type="ChEBI" id="CHEBI:49883"/>
    </cofactor>
    <text evidence="1">Binds 2 [4Fe-4S] clusters. One cluster is coordinated with 3 cysteines and an exchangeable S-adenosyl-L-methionine.</text>
</comment>
<comment type="subunit">
    <text evidence="1">Monomer.</text>
</comment>
<comment type="subcellular location">
    <subcellularLocation>
        <location evidence="1">Cytoplasm</location>
    </subcellularLocation>
</comment>
<comment type="similarity">
    <text evidence="1">Belongs to the methylthiotransferase family. MiaB subfamily.</text>
</comment>
<gene>
    <name evidence="1" type="primary">miaB</name>
    <name type="ordered locus">CHY_1398</name>
</gene>
<dbReference type="EC" id="2.8.4.3" evidence="1"/>
<dbReference type="EMBL" id="CP000141">
    <property type="protein sequence ID" value="ABB13748.1"/>
    <property type="molecule type" value="Genomic_DNA"/>
</dbReference>
<dbReference type="RefSeq" id="WP_011344305.1">
    <property type="nucleotide sequence ID" value="NC_007503.1"/>
</dbReference>
<dbReference type="SMR" id="Q3ACA4"/>
<dbReference type="FunCoup" id="Q3ACA4">
    <property type="interactions" value="435"/>
</dbReference>
<dbReference type="STRING" id="246194.CHY_1398"/>
<dbReference type="KEGG" id="chy:CHY_1398"/>
<dbReference type="eggNOG" id="COG0621">
    <property type="taxonomic scope" value="Bacteria"/>
</dbReference>
<dbReference type="HOGENOM" id="CLU_018697_2_0_9"/>
<dbReference type="InParanoid" id="Q3ACA4"/>
<dbReference type="OrthoDB" id="9805215at2"/>
<dbReference type="Proteomes" id="UP000002706">
    <property type="component" value="Chromosome"/>
</dbReference>
<dbReference type="GO" id="GO:0005829">
    <property type="term" value="C:cytosol"/>
    <property type="evidence" value="ECO:0007669"/>
    <property type="project" value="TreeGrafter"/>
</dbReference>
<dbReference type="GO" id="GO:0051539">
    <property type="term" value="F:4 iron, 4 sulfur cluster binding"/>
    <property type="evidence" value="ECO:0007669"/>
    <property type="project" value="UniProtKB-UniRule"/>
</dbReference>
<dbReference type="GO" id="GO:0046872">
    <property type="term" value="F:metal ion binding"/>
    <property type="evidence" value="ECO:0007669"/>
    <property type="project" value="UniProtKB-KW"/>
</dbReference>
<dbReference type="GO" id="GO:0035597">
    <property type="term" value="F:N6-isopentenyladenosine methylthiotransferase activity"/>
    <property type="evidence" value="ECO:0007669"/>
    <property type="project" value="TreeGrafter"/>
</dbReference>
<dbReference type="CDD" id="cd01335">
    <property type="entry name" value="Radical_SAM"/>
    <property type="match status" value="1"/>
</dbReference>
<dbReference type="FunFam" id="3.40.50.12160:FF:000006">
    <property type="entry name" value="tRNA-2-methylthio-N(6)-dimethylallyladenosine synthase"/>
    <property type="match status" value="1"/>
</dbReference>
<dbReference type="FunFam" id="3.80.30.20:FF:000001">
    <property type="entry name" value="tRNA-2-methylthio-N(6)-dimethylallyladenosine synthase 2"/>
    <property type="match status" value="1"/>
</dbReference>
<dbReference type="Gene3D" id="3.40.50.12160">
    <property type="entry name" value="Methylthiotransferase, N-terminal domain"/>
    <property type="match status" value="1"/>
</dbReference>
<dbReference type="Gene3D" id="3.80.30.20">
    <property type="entry name" value="tm_1862 like domain"/>
    <property type="match status" value="1"/>
</dbReference>
<dbReference type="HAMAP" id="MF_01864">
    <property type="entry name" value="tRNA_metthiotr_MiaB"/>
    <property type="match status" value="1"/>
</dbReference>
<dbReference type="InterPro" id="IPR006638">
    <property type="entry name" value="Elp3/MiaA/NifB-like_rSAM"/>
</dbReference>
<dbReference type="InterPro" id="IPR005839">
    <property type="entry name" value="Methylthiotransferase"/>
</dbReference>
<dbReference type="InterPro" id="IPR020612">
    <property type="entry name" value="Methylthiotransferase_CS"/>
</dbReference>
<dbReference type="InterPro" id="IPR013848">
    <property type="entry name" value="Methylthiotransferase_N"/>
</dbReference>
<dbReference type="InterPro" id="IPR038135">
    <property type="entry name" value="Methylthiotransferase_N_sf"/>
</dbReference>
<dbReference type="InterPro" id="IPR006467">
    <property type="entry name" value="MiaB-like_bact"/>
</dbReference>
<dbReference type="InterPro" id="IPR006463">
    <property type="entry name" value="MiaB_methiolase"/>
</dbReference>
<dbReference type="InterPro" id="IPR007197">
    <property type="entry name" value="rSAM"/>
</dbReference>
<dbReference type="InterPro" id="IPR023404">
    <property type="entry name" value="rSAM_horseshoe"/>
</dbReference>
<dbReference type="InterPro" id="IPR002792">
    <property type="entry name" value="TRAM_dom"/>
</dbReference>
<dbReference type="NCBIfam" id="TIGR01579">
    <property type="entry name" value="MiaB-like-C"/>
    <property type="match status" value="1"/>
</dbReference>
<dbReference type="NCBIfam" id="TIGR01574">
    <property type="entry name" value="miaB-methiolase"/>
    <property type="match status" value="1"/>
</dbReference>
<dbReference type="NCBIfam" id="TIGR00089">
    <property type="entry name" value="MiaB/RimO family radical SAM methylthiotransferase"/>
    <property type="match status" value="1"/>
</dbReference>
<dbReference type="PANTHER" id="PTHR43020">
    <property type="entry name" value="CDK5 REGULATORY SUBUNIT-ASSOCIATED PROTEIN 1"/>
    <property type="match status" value="1"/>
</dbReference>
<dbReference type="PANTHER" id="PTHR43020:SF2">
    <property type="entry name" value="MITOCHONDRIAL TRNA METHYLTHIOTRANSFERASE CDK5RAP1"/>
    <property type="match status" value="1"/>
</dbReference>
<dbReference type="Pfam" id="PF04055">
    <property type="entry name" value="Radical_SAM"/>
    <property type="match status" value="1"/>
</dbReference>
<dbReference type="Pfam" id="PF01938">
    <property type="entry name" value="TRAM"/>
    <property type="match status" value="1"/>
</dbReference>
<dbReference type="Pfam" id="PF00919">
    <property type="entry name" value="UPF0004"/>
    <property type="match status" value="1"/>
</dbReference>
<dbReference type="SFLD" id="SFLDF00273">
    <property type="entry name" value="(dimethylallyl)adenosine_tRNA"/>
    <property type="match status" value="1"/>
</dbReference>
<dbReference type="SFLD" id="SFLDG01082">
    <property type="entry name" value="B12-binding_domain_containing"/>
    <property type="match status" value="1"/>
</dbReference>
<dbReference type="SFLD" id="SFLDG01061">
    <property type="entry name" value="methylthiotransferase"/>
    <property type="match status" value="1"/>
</dbReference>
<dbReference type="SMART" id="SM00729">
    <property type="entry name" value="Elp3"/>
    <property type="match status" value="1"/>
</dbReference>
<dbReference type="SUPFAM" id="SSF102114">
    <property type="entry name" value="Radical SAM enzymes"/>
    <property type="match status" value="1"/>
</dbReference>
<dbReference type="PROSITE" id="PS51449">
    <property type="entry name" value="MTTASE_N"/>
    <property type="match status" value="1"/>
</dbReference>
<dbReference type="PROSITE" id="PS01278">
    <property type="entry name" value="MTTASE_RADICAL"/>
    <property type="match status" value="1"/>
</dbReference>
<dbReference type="PROSITE" id="PS51918">
    <property type="entry name" value="RADICAL_SAM"/>
    <property type="match status" value="1"/>
</dbReference>
<dbReference type="PROSITE" id="PS50926">
    <property type="entry name" value="TRAM"/>
    <property type="match status" value="1"/>
</dbReference>
<organism>
    <name type="scientific">Carboxydothermus hydrogenoformans (strain ATCC BAA-161 / DSM 6008 / Z-2901)</name>
    <dbReference type="NCBI Taxonomy" id="246194"/>
    <lineage>
        <taxon>Bacteria</taxon>
        <taxon>Bacillati</taxon>
        <taxon>Bacillota</taxon>
        <taxon>Clostridia</taxon>
        <taxon>Thermoanaerobacterales</taxon>
        <taxon>Thermoanaerobacteraceae</taxon>
        <taxon>Carboxydothermus</taxon>
    </lineage>
</organism>